<comment type="function">
    <text evidence="1">Component of specific cytoplasmic RNA granules involved in post-transcriptional regulation of specific genes: probably acts by binding to specific mRNAs and regulating their translation. Probably required during spermatogenesis (By similarity).</text>
</comment>
<comment type="subcellular location">
    <subcellularLocation>
        <location>Cytoplasm</location>
    </subcellularLocation>
    <text evidence="1">Localizes to cytoplasmic RNA granules.</text>
</comment>
<comment type="similarity">
    <text evidence="5">Belongs to the TDRD7 family.</text>
</comment>
<name>TDRD7_XENLA</name>
<keyword id="KW-0963">Cytoplasm</keyword>
<keyword id="KW-0221">Differentiation</keyword>
<keyword id="KW-1185">Reference proteome</keyword>
<keyword id="KW-0677">Repeat</keyword>
<keyword id="KW-0694">RNA-binding</keyword>
<keyword id="KW-0744">Spermatogenesis</keyword>
<protein>
    <recommendedName>
        <fullName>Tudor domain-containing protein 7</fullName>
    </recommendedName>
</protein>
<feature type="chain" id="PRO_0000409520" description="Tudor domain-containing protein 7">
    <location>
        <begin position="1"/>
        <end position="1079"/>
    </location>
</feature>
<feature type="domain" description="HTH OST-type 1" evidence="3">
    <location>
        <begin position="1"/>
        <end position="69"/>
    </location>
</feature>
<feature type="domain" description="HTH OST-type 2" evidence="3">
    <location>
        <begin position="218"/>
        <end position="288"/>
    </location>
</feature>
<feature type="domain" description="HTH OST-type 3" evidence="3">
    <location>
        <begin position="330"/>
        <end position="398"/>
    </location>
</feature>
<feature type="domain" description="Tudor 1" evidence="2">
    <location>
        <begin position="494"/>
        <end position="551"/>
    </location>
</feature>
<feature type="domain" description="Tudor 2" evidence="2">
    <location>
        <begin position="684"/>
        <end position="741"/>
    </location>
</feature>
<feature type="region of interest" description="Disordered" evidence="4">
    <location>
        <begin position="109"/>
        <end position="132"/>
    </location>
</feature>
<gene>
    <name type="primary">tdrd7</name>
</gene>
<evidence type="ECO:0000250" key="1"/>
<evidence type="ECO:0000255" key="2">
    <source>
        <dbReference type="PROSITE-ProRule" id="PRU00211"/>
    </source>
</evidence>
<evidence type="ECO:0000255" key="3">
    <source>
        <dbReference type="PROSITE-ProRule" id="PRU00975"/>
    </source>
</evidence>
<evidence type="ECO:0000256" key="4">
    <source>
        <dbReference type="SAM" id="MobiDB-lite"/>
    </source>
</evidence>
<evidence type="ECO:0000305" key="5"/>
<accession>Q6NU04</accession>
<reference key="1">
    <citation type="submission" date="2004-04" db="EMBL/GenBank/DDBJ databases">
        <authorList>
            <consortium name="NIH - Xenopus Gene Collection (XGC) project"/>
        </authorList>
    </citation>
    <scope>NUCLEOTIDE SEQUENCE [LARGE SCALE MRNA]</scope>
    <source>
        <tissue>Embryo</tissue>
    </source>
</reference>
<sequence length="1079" mass="120959">MLRAVLQANKNGVPLHKLQAEYKSVTGEPIPFKDMGFPALDAYLKSIPSVVRIEVSRVGEVTCYAVACKETARIAELVAHQRSSKKKGGHQVNCQMRLKSTAPVSHFGKPKITLRQPGFTPPQEMMIRKPVPTPPWGKGNYFGPRTFEYSPQPIPQLFGVAPMQRHLPNMNRPERKVTLPPRFQREVKSPLLPTPITDSNANHTQSYKRVVIGSGQSDLPVIQNNLKELLNKHSNGLWLSKLPQLYKETYKQDLGGEVLKQVPSWTHICTVQKLVSSGHTEIVIYATTRKQQPSTKNIQNRSNDQAKPNVPVVLSTPSSPPPLQISGSIPKDELKEKISTILTKYSNGLWYHALPKVFEDMFKQKLPIEAFNLDSLTDICTVDLISEEPFKAILYGKSAERAVQNSNPSVNNNIPQKLHDREPPLCSEEPDMTMAPPPLVIPSEASPSVLVVELNSTNDVVIRYIGRDYSAAQERMEDELKDFCSKSSTAQVRPLRVGQLVAAKAEEDAWLRAQISAIEDKKIKVCYVDYGFSETVDITKVCKLGKPFYTLPFQATKCRLAGLEAFCDDSVIIKALEAKACGKILAVEILHKSEKPLVVLYDTSGDDDININAACLKELYDRSLSLQLKANLSFSNVTVTNVCSDGTLFCQVPSKGLAKLYETLQKVDGEFQFQQVTSHLYVSLPFCGKICLYHYKGKWARVEITNVHSSRALDVHFLDSGTIASVKVSELKEIPPPLLRDLISIPPQALKCCLADLPLNIGMWTPDAVLWLRNTVLNCPECSIKVVKIDEAMNMVHIYLFTSNNFPDLERSINRRITNEELLKQKQKDVFLNMSVSSLEKGRGGGGAPASQLFPSGPCISPTSVAKKPDMQQSSPVPSFNMPPALPLPRPGEHMDVFVSVACHPGHFVCQPWQELHKLELVMDEMRLHYSTTEEKPIALEKNKLYAAKIENNWYRVLVKGILTNGLVSVYELDHGRHELVSCRKVQPLIEKFMHLPFQAITSQLAGINCEQWSEETSIVFRNHVEKKPLVALVQTIHESTHPWERRVVAYIVDTTLPDTDIWIHELMTEYLAQFSKPE</sequence>
<dbReference type="EMBL" id="BC068798">
    <property type="protein sequence ID" value="AAH68798.1"/>
    <property type="molecule type" value="mRNA"/>
</dbReference>
<dbReference type="RefSeq" id="NP_001084569.2">
    <property type="nucleotide sequence ID" value="NM_001091100.1"/>
</dbReference>
<dbReference type="SMR" id="Q6NU04"/>
<dbReference type="DNASU" id="414521"/>
<dbReference type="GeneID" id="414521"/>
<dbReference type="KEGG" id="xla:414521"/>
<dbReference type="AGR" id="Xenbase:XB-GENE-944688"/>
<dbReference type="CTD" id="414521"/>
<dbReference type="Xenbase" id="XB-GENE-944688">
    <property type="gene designation" value="tdrd7.L"/>
</dbReference>
<dbReference type="OrthoDB" id="10034606at2759"/>
<dbReference type="Proteomes" id="UP000186698">
    <property type="component" value="Chromosome 1L"/>
</dbReference>
<dbReference type="Bgee" id="414521">
    <property type="expression patterns" value="Expressed in testis and 19 other cell types or tissues"/>
</dbReference>
<dbReference type="GO" id="GO:0043186">
    <property type="term" value="C:P granule"/>
    <property type="evidence" value="ECO:0000318"/>
    <property type="project" value="GO_Central"/>
</dbReference>
<dbReference type="GO" id="GO:0035770">
    <property type="term" value="C:ribonucleoprotein granule"/>
    <property type="evidence" value="ECO:0000250"/>
    <property type="project" value="UniProtKB"/>
</dbReference>
<dbReference type="GO" id="GO:0003729">
    <property type="term" value="F:mRNA binding"/>
    <property type="evidence" value="ECO:0000250"/>
    <property type="project" value="UniProtKB"/>
</dbReference>
<dbReference type="GO" id="GO:0070306">
    <property type="term" value="P:lens fiber cell differentiation"/>
    <property type="evidence" value="ECO:0000250"/>
    <property type="project" value="UniProtKB"/>
</dbReference>
<dbReference type="GO" id="GO:0002089">
    <property type="term" value="P:lens morphogenesis in camera-type eye"/>
    <property type="evidence" value="ECO:0000250"/>
    <property type="project" value="UniProtKB"/>
</dbReference>
<dbReference type="GO" id="GO:0030719">
    <property type="term" value="P:P granule organization"/>
    <property type="evidence" value="ECO:0000318"/>
    <property type="project" value="GO_Central"/>
</dbReference>
<dbReference type="GO" id="GO:0034587">
    <property type="term" value="P:piRNA processing"/>
    <property type="evidence" value="ECO:0000318"/>
    <property type="project" value="GO_Central"/>
</dbReference>
<dbReference type="GO" id="GO:0010608">
    <property type="term" value="P:post-transcriptional regulation of gene expression"/>
    <property type="evidence" value="ECO:0000250"/>
    <property type="project" value="UniProtKB"/>
</dbReference>
<dbReference type="GO" id="GO:0007283">
    <property type="term" value="P:spermatogenesis"/>
    <property type="evidence" value="ECO:0000250"/>
    <property type="project" value="UniProtKB"/>
</dbReference>
<dbReference type="CDD" id="cd09973">
    <property type="entry name" value="LOTUS_2_TDRD7"/>
    <property type="match status" value="1"/>
</dbReference>
<dbReference type="CDD" id="cd09974">
    <property type="entry name" value="LOTUS_3_TDRD7"/>
    <property type="match status" value="1"/>
</dbReference>
<dbReference type="CDD" id="cd20427">
    <property type="entry name" value="Tudor_TDRD7_rpt1"/>
    <property type="match status" value="1"/>
</dbReference>
<dbReference type="CDD" id="cd20428">
    <property type="entry name" value="Tudor_TDRD7_rpt2"/>
    <property type="match status" value="1"/>
</dbReference>
<dbReference type="CDD" id="cd20429">
    <property type="entry name" value="Tudor_TDRD7_rpt3"/>
    <property type="match status" value="1"/>
</dbReference>
<dbReference type="FunFam" id="2.30.30.140:FF:000065">
    <property type="entry name" value="tudor domain-containing protein 7"/>
    <property type="match status" value="1"/>
</dbReference>
<dbReference type="FunFam" id="2.30.30.140:FF:000045">
    <property type="entry name" value="tudor domain-containing protein 7 isoform X1"/>
    <property type="match status" value="1"/>
</dbReference>
<dbReference type="Gene3D" id="2.30.30.140">
    <property type="match status" value="3"/>
</dbReference>
<dbReference type="Gene3D" id="2.40.50.90">
    <property type="match status" value="3"/>
</dbReference>
<dbReference type="Gene3D" id="3.30.420.610">
    <property type="entry name" value="LOTUS domain-like"/>
    <property type="match status" value="3"/>
</dbReference>
<dbReference type="InterPro" id="IPR041966">
    <property type="entry name" value="LOTUS-like"/>
</dbReference>
<dbReference type="InterPro" id="IPR025605">
    <property type="entry name" value="OST-HTH/LOTUS_dom"/>
</dbReference>
<dbReference type="InterPro" id="IPR035437">
    <property type="entry name" value="SNase_OB-fold_sf"/>
</dbReference>
<dbReference type="InterPro" id="IPR037978">
    <property type="entry name" value="TDRD7_LOTUS_3"/>
</dbReference>
<dbReference type="InterPro" id="IPR002999">
    <property type="entry name" value="Tudor"/>
</dbReference>
<dbReference type="InterPro" id="IPR050621">
    <property type="entry name" value="Tudor_domain_containing"/>
</dbReference>
<dbReference type="InterPro" id="IPR047448">
    <property type="entry name" value="Tudor_TDRD7_rpt2"/>
</dbReference>
<dbReference type="InterPro" id="IPR047449">
    <property type="entry name" value="Tudor_TDRD7_rpt3"/>
</dbReference>
<dbReference type="PANTHER" id="PTHR22948:SF29">
    <property type="entry name" value="FI02030P-RELATED"/>
    <property type="match status" value="1"/>
</dbReference>
<dbReference type="PANTHER" id="PTHR22948">
    <property type="entry name" value="TUDOR DOMAIN CONTAINING PROTEIN"/>
    <property type="match status" value="1"/>
</dbReference>
<dbReference type="Pfam" id="PF12872">
    <property type="entry name" value="OST-HTH"/>
    <property type="match status" value="2"/>
</dbReference>
<dbReference type="Pfam" id="PF00567">
    <property type="entry name" value="TUDOR"/>
    <property type="match status" value="3"/>
</dbReference>
<dbReference type="SMART" id="SM00333">
    <property type="entry name" value="TUDOR"/>
    <property type="match status" value="3"/>
</dbReference>
<dbReference type="SUPFAM" id="SSF63748">
    <property type="entry name" value="Tudor/PWWP/MBT"/>
    <property type="match status" value="3"/>
</dbReference>
<dbReference type="PROSITE" id="PS51644">
    <property type="entry name" value="HTH_OST"/>
    <property type="match status" value="3"/>
</dbReference>
<dbReference type="PROSITE" id="PS50304">
    <property type="entry name" value="TUDOR"/>
    <property type="match status" value="2"/>
</dbReference>
<organism>
    <name type="scientific">Xenopus laevis</name>
    <name type="common">African clawed frog</name>
    <dbReference type="NCBI Taxonomy" id="8355"/>
    <lineage>
        <taxon>Eukaryota</taxon>
        <taxon>Metazoa</taxon>
        <taxon>Chordata</taxon>
        <taxon>Craniata</taxon>
        <taxon>Vertebrata</taxon>
        <taxon>Euteleostomi</taxon>
        <taxon>Amphibia</taxon>
        <taxon>Batrachia</taxon>
        <taxon>Anura</taxon>
        <taxon>Pipoidea</taxon>
        <taxon>Pipidae</taxon>
        <taxon>Xenopodinae</taxon>
        <taxon>Xenopus</taxon>
        <taxon>Xenopus</taxon>
    </lineage>
</organism>
<proteinExistence type="evidence at transcript level"/>